<protein>
    <recommendedName>
        <fullName>Increased recombination centers protein 22</fullName>
    </recommendedName>
</protein>
<evidence type="ECO:0000250" key="1"/>
<evidence type="ECO:0000255" key="2"/>
<evidence type="ECO:0000305" key="3"/>
<gene>
    <name type="primary">IRC22</name>
    <name type="ORF">PICST_83260</name>
</gene>
<reference key="1">
    <citation type="journal article" date="2007" name="Nat. Biotechnol.">
        <title>Genome sequence of the lignocellulose-bioconverting and xylose-fermenting yeast Pichia stipitis.</title>
        <authorList>
            <person name="Jeffries T.W."/>
            <person name="Grigoriev I.V."/>
            <person name="Grimwood J."/>
            <person name="Laplaza J.M."/>
            <person name="Aerts A."/>
            <person name="Salamov A."/>
            <person name="Schmutz J."/>
            <person name="Lindquist E."/>
            <person name="Dehal P."/>
            <person name="Shapiro H."/>
            <person name="Jin Y.-S."/>
            <person name="Passoth V."/>
            <person name="Richardson P.M."/>
        </authorList>
    </citation>
    <scope>NUCLEOTIDE SEQUENCE [LARGE SCALE GENOMIC DNA]</scope>
    <source>
        <strain>ATCC 58785 / CBS 6054 / NBRC 10063 / NRRL Y-11545</strain>
    </source>
</reference>
<dbReference type="EMBL" id="CP000498">
    <property type="protein sequence ID" value="ABN66166.1"/>
    <property type="molecule type" value="Genomic_DNA"/>
</dbReference>
<dbReference type="RefSeq" id="XP_001384195.1">
    <property type="nucleotide sequence ID" value="XM_001384158.1"/>
</dbReference>
<dbReference type="FunCoup" id="A3LU17">
    <property type="interactions" value="27"/>
</dbReference>
<dbReference type="STRING" id="322104.A3LU17"/>
<dbReference type="GeneID" id="4838605"/>
<dbReference type="KEGG" id="pic:PICST_83260"/>
<dbReference type="eggNOG" id="ENOG502S7BF">
    <property type="taxonomic scope" value="Eukaryota"/>
</dbReference>
<dbReference type="HOGENOM" id="CLU_078554_0_0_1"/>
<dbReference type="InParanoid" id="A3LU17"/>
<dbReference type="OMA" id="WLPETYK"/>
<dbReference type="OrthoDB" id="1926781at2759"/>
<dbReference type="Proteomes" id="UP000002258">
    <property type="component" value="Chromosome 4"/>
</dbReference>
<dbReference type="GO" id="GO:0005789">
    <property type="term" value="C:endoplasmic reticulum membrane"/>
    <property type="evidence" value="ECO:0007669"/>
    <property type="project" value="UniProtKB-SubCell"/>
</dbReference>
<dbReference type="InterPro" id="IPR005595">
    <property type="entry name" value="TRAP_alpha"/>
</dbReference>
<dbReference type="PANTHER" id="PTHR12924:SF0">
    <property type="entry name" value="TRANSLOCON-ASSOCIATED PROTEIN SUBUNIT ALPHA"/>
    <property type="match status" value="1"/>
</dbReference>
<dbReference type="PANTHER" id="PTHR12924">
    <property type="entry name" value="TRANSLOCON-ASSOCIATED PROTEIN, ALPHA SUBUNIT"/>
    <property type="match status" value="1"/>
</dbReference>
<dbReference type="Pfam" id="PF03896">
    <property type="entry name" value="TRAP_alpha"/>
    <property type="match status" value="1"/>
</dbReference>
<sequence length="234" mass="25510">MKFSAILSAVFASIAAVSAIEPAEGRQHEIAFIVDYKIKQQPELTQADVAEWTNGETITLQYHAQNNEAEEVTIIGVSGTFIEPSTGNVKVNMTAATIGPIVVAPGESHVFEQNIPLNVLPDHYLLVPQVYVAHEEKVKHVAIRGQLATVVEPNVSIFNPQLLFLELVLLATFAGFGYFVYEFWGKQYFKGTAPVAAKVKRAASPSSATASGKAYDESWIPEAHLKQKKTKKAA</sequence>
<proteinExistence type="inferred from homology"/>
<name>IRC22_PICST</name>
<comment type="function">
    <text>Is probably involved in a pathway contributing to genomic integrity.</text>
</comment>
<comment type="subcellular location">
    <subcellularLocation>
        <location evidence="1">Endoplasmic reticulum membrane</location>
        <topology evidence="1">Single-pass type I membrane protein</topology>
    </subcellularLocation>
</comment>
<comment type="similarity">
    <text evidence="3">Belongs to the IRC22 family.</text>
</comment>
<keyword id="KW-0256">Endoplasmic reticulum</keyword>
<keyword id="KW-0472">Membrane</keyword>
<keyword id="KW-1185">Reference proteome</keyword>
<keyword id="KW-0732">Signal</keyword>
<keyword id="KW-0812">Transmembrane</keyword>
<keyword id="KW-1133">Transmembrane helix</keyword>
<feature type="signal peptide" evidence="2">
    <location>
        <begin position="1"/>
        <end position="19"/>
    </location>
</feature>
<feature type="chain" id="PRO_0000399084" description="Increased recombination centers protein 22">
    <location>
        <begin position="20"/>
        <end position="234"/>
    </location>
</feature>
<feature type="topological domain" description="Lumenal" evidence="2">
    <location>
        <begin position="20"/>
        <end position="162"/>
    </location>
</feature>
<feature type="transmembrane region" description="Helical" evidence="2">
    <location>
        <begin position="163"/>
        <end position="183"/>
    </location>
</feature>
<feature type="topological domain" description="Cytoplasmic" evidence="2">
    <location>
        <begin position="184"/>
        <end position="234"/>
    </location>
</feature>
<accession>A3LU17</accession>
<organism>
    <name type="scientific">Scheffersomyces stipitis (strain ATCC 58785 / CBS 6054 / NBRC 10063 / NRRL Y-11545)</name>
    <name type="common">Yeast</name>
    <name type="synonym">Pichia stipitis</name>
    <dbReference type="NCBI Taxonomy" id="322104"/>
    <lineage>
        <taxon>Eukaryota</taxon>
        <taxon>Fungi</taxon>
        <taxon>Dikarya</taxon>
        <taxon>Ascomycota</taxon>
        <taxon>Saccharomycotina</taxon>
        <taxon>Pichiomycetes</taxon>
        <taxon>Debaryomycetaceae</taxon>
        <taxon>Scheffersomyces</taxon>
    </lineage>
</organism>